<gene>
    <name type="ordered locus">CGSHiEE_03630</name>
</gene>
<feature type="signal peptide" evidence="1">
    <location>
        <begin position="1"/>
        <end position="21"/>
    </location>
</feature>
<feature type="chain" id="PRO_1000046902" description="UPF0319 protein CGSHiEE_03630">
    <location>
        <begin position="22"/>
        <end position="221"/>
    </location>
</feature>
<evidence type="ECO:0000255" key="1">
    <source>
        <dbReference type="HAMAP-Rule" id="MF_00789"/>
    </source>
</evidence>
<proteinExistence type="inferred from homology"/>
<dbReference type="EMBL" id="CP000671">
    <property type="protein sequence ID" value="ABQ98145.1"/>
    <property type="molecule type" value="Genomic_DNA"/>
</dbReference>
<dbReference type="KEGG" id="hip:CGSHiEE_03630"/>
<dbReference type="HOGENOM" id="CLU_073782_2_0_6"/>
<dbReference type="HAMAP" id="MF_00789">
    <property type="entry name" value="UPF0319"/>
    <property type="match status" value="1"/>
</dbReference>
<dbReference type="InterPro" id="IPR018635">
    <property type="entry name" value="UPF0319"/>
</dbReference>
<dbReference type="NCBIfam" id="NF002516">
    <property type="entry name" value="PRK01904.1"/>
    <property type="match status" value="1"/>
</dbReference>
<dbReference type="PANTHER" id="PTHR38108">
    <property type="entry name" value="UPF0319 PROTEIN YCCT"/>
    <property type="match status" value="1"/>
</dbReference>
<dbReference type="PANTHER" id="PTHR38108:SF1">
    <property type="entry name" value="UPF0319 PROTEIN YCCT"/>
    <property type="match status" value="1"/>
</dbReference>
<dbReference type="Pfam" id="PF09829">
    <property type="entry name" value="DUF2057"/>
    <property type="match status" value="1"/>
</dbReference>
<accession>A5UBJ4</accession>
<sequence length="221" mass="23395">MKLRAVVLGLATLCTSTATFAGMVSTSSNLEFLAIDGQKASKSLGKAKTFTVDDTQNHQVVVRLNEIVGSGSNQSLFESNPVIVTFQGNAEDLVISAPVIRNLDSGDKFNQMPNITVKTKSGNAISAKVDVLKQEGLFPSGNVLNDLAEYNASGAAASVSKFAATTVASSVAVAPAGNAKANKGKVVVQGENVAEQQLQYWFQQADKETQTRFLNWAKSHK</sequence>
<comment type="similarity">
    <text evidence="1">Belongs to the UPF0319 family.</text>
</comment>
<keyword id="KW-0732">Signal</keyword>
<organism>
    <name type="scientific">Haemophilus influenzae (strain PittEE)</name>
    <dbReference type="NCBI Taxonomy" id="374930"/>
    <lineage>
        <taxon>Bacteria</taxon>
        <taxon>Pseudomonadati</taxon>
        <taxon>Pseudomonadota</taxon>
        <taxon>Gammaproteobacteria</taxon>
        <taxon>Pasteurellales</taxon>
        <taxon>Pasteurellaceae</taxon>
        <taxon>Haemophilus</taxon>
    </lineage>
</organism>
<reference key="1">
    <citation type="journal article" date="2007" name="Genome Biol.">
        <title>Characterization and modeling of the Haemophilus influenzae core and supragenomes based on the complete genomic sequences of Rd and 12 clinical nontypeable strains.</title>
        <authorList>
            <person name="Hogg J.S."/>
            <person name="Hu F.Z."/>
            <person name="Janto B."/>
            <person name="Boissy R."/>
            <person name="Hayes J."/>
            <person name="Keefe R."/>
            <person name="Post J.C."/>
            <person name="Ehrlich G.D."/>
        </authorList>
    </citation>
    <scope>NUCLEOTIDE SEQUENCE [LARGE SCALE GENOMIC DNA]</scope>
    <source>
        <strain>PittEE</strain>
    </source>
</reference>
<protein>
    <recommendedName>
        <fullName evidence="1">UPF0319 protein CGSHiEE_03630</fullName>
    </recommendedName>
</protein>
<name>Y3630_HAEIE</name>